<protein>
    <recommendedName>
        <fullName evidence="1">D-aminoacyl-tRNA deacylase</fullName>
        <shortName evidence="1">DTD</shortName>
        <ecNumber evidence="1">3.1.1.96</ecNumber>
    </recommendedName>
    <alternativeName>
        <fullName evidence="1">Gly-tRNA(Ala) deacylase</fullName>
    </alternativeName>
</protein>
<organism>
    <name type="scientific">Staphylococcus aureus (strain MW2)</name>
    <dbReference type="NCBI Taxonomy" id="196620"/>
    <lineage>
        <taxon>Bacteria</taxon>
        <taxon>Bacillati</taxon>
        <taxon>Bacillota</taxon>
        <taxon>Bacilli</taxon>
        <taxon>Bacillales</taxon>
        <taxon>Staphylococcaceae</taxon>
        <taxon>Staphylococcus</taxon>
    </lineage>
</organism>
<sequence length="150" mass="16697">MKVVVQRVKEASVTNDTLNNQIKKGYCLLVGIGQNSTEQDADVIAKKIANARLFEDDNNKLNFNIQQMNGEILSVSQFTLYADVKKGNRPGFSNSKNPDQAVKIYEYFNDALRAYGLTVKTGEFGTHMNVSINNDGPVTIIYESQDGKIQ</sequence>
<evidence type="ECO:0000255" key="1">
    <source>
        <dbReference type="HAMAP-Rule" id="MF_00518"/>
    </source>
</evidence>
<name>DTD_STAAW</name>
<accession>P0A027</accession>
<accession>O32420</accession>
<dbReference type="EC" id="3.1.1.96" evidence="1"/>
<dbReference type="EMBL" id="BA000033">
    <property type="protein sequence ID" value="BAB95448.1"/>
    <property type="molecule type" value="Genomic_DNA"/>
</dbReference>
<dbReference type="RefSeq" id="WP_000869983.1">
    <property type="nucleotide sequence ID" value="NC_003923.1"/>
</dbReference>
<dbReference type="SMR" id="P0A027"/>
<dbReference type="KEGG" id="sam:MW1583"/>
<dbReference type="HOGENOM" id="CLU_076901_1_0_9"/>
<dbReference type="GO" id="GO:0005737">
    <property type="term" value="C:cytoplasm"/>
    <property type="evidence" value="ECO:0007669"/>
    <property type="project" value="UniProtKB-SubCell"/>
</dbReference>
<dbReference type="GO" id="GO:0051500">
    <property type="term" value="F:D-tyrosyl-tRNA(Tyr) deacylase activity"/>
    <property type="evidence" value="ECO:0007669"/>
    <property type="project" value="TreeGrafter"/>
</dbReference>
<dbReference type="GO" id="GO:0106026">
    <property type="term" value="F:Gly-tRNA(Ala) deacylase activity"/>
    <property type="evidence" value="ECO:0007669"/>
    <property type="project" value="UniProtKB-UniRule"/>
</dbReference>
<dbReference type="GO" id="GO:0043908">
    <property type="term" value="F:Ser(Gly)-tRNA(Ala) hydrolase activity"/>
    <property type="evidence" value="ECO:0007669"/>
    <property type="project" value="UniProtKB-UniRule"/>
</dbReference>
<dbReference type="GO" id="GO:0000049">
    <property type="term" value="F:tRNA binding"/>
    <property type="evidence" value="ECO:0007669"/>
    <property type="project" value="UniProtKB-UniRule"/>
</dbReference>
<dbReference type="GO" id="GO:0019478">
    <property type="term" value="P:D-amino acid catabolic process"/>
    <property type="evidence" value="ECO:0007669"/>
    <property type="project" value="UniProtKB-UniRule"/>
</dbReference>
<dbReference type="FunFam" id="3.50.80.10:FF:000005">
    <property type="entry name" value="D-aminoacyl-tRNA deacylase"/>
    <property type="match status" value="1"/>
</dbReference>
<dbReference type="Gene3D" id="3.50.80.10">
    <property type="entry name" value="D-tyrosyl-tRNA(Tyr) deacylase"/>
    <property type="match status" value="1"/>
</dbReference>
<dbReference type="HAMAP" id="MF_00518">
    <property type="entry name" value="Deacylase_Dtd"/>
    <property type="match status" value="1"/>
</dbReference>
<dbReference type="InterPro" id="IPR003732">
    <property type="entry name" value="Daa-tRNA_deacyls_DTD"/>
</dbReference>
<dbReference type="InterPro" id="IPR023509">
    <property type="entry name" value="DTD-like_sf"/>
</dbReference>
<dbReference type="NCBIfam" id="TIGR00256">
    <property type="entry name" value="D-aminoacyl-tRNA deacylase"/>
    <property type="match status" value="1"/>
</dbReference>
<dbReference type="PANTHER" id="PTHR10472:SF5">
    <property type="entry name" value="D-AMINOACYL-TRNA DEACYLASE 1"/>
    <property type="match status" value="1"/>
</dbReference>
<dbReference type="PANTHER" id="PTHR10472">
    <property type="entry name" value="D-TYROSYL-TRNA TYR DEACYLASE"/>
    <property type="match status" value="1"/>
</dbReference>
<dbReference type="Pfam" id="PF02580">
    <property type="entry name" value="Tyr_Deacylase"/>
    <property type="match status" value="1"/>
</dbReference>
<dbReference type="SUPFAM" id="SSF69500">
    <property type="entry name" value="DTD-like"/>
    <property type="match status" value="1"/>
</dbReference>
<feature type="chain" id="PRO_0000164591" description="D-aminoacyl-tRNA deacylase">
    <location>
        <begin position="1"/>
        <end position="150"/>
    </location>
</feature>
<feature type="short sequence motif" description="Gly-cisPro motif, important for rejection of L-amino acids" evidence="1">
    <location>
        <begin position="136"/>
        <end position="137"/>
    </location>
</feature>
<reference key="1">
    <citation type="journal article" date="2002" name="Lancet">
        <title>Genome and virulence determinants of high virulence community-acquired MRSA.</title>
        <authorList>
            <person name="Baba T."/>
            <person name="Takeuchi F."/>
            <person name="Kuroda M."/>
            <person name="Yuzawa H."/>
            <person name="Aoki K."/>
            <person name="Oguchi A."/>
            <person name="Nagai Y."/>
            <person name="Iwama N."/>
            <person name="Asano K."/>
            <person name="Naimi T."/>
            <person name="Kuroda H."/>
            <person name="Cui L."/>
            <person name="Yamamoto K."/>
            <person name="Hiramatsu K."/>
        </authorList>
    </citation>
    <scope>NUCLEOTIDE SEQUENCE [LARGE SCALE GENOMIC DNA]</scope>
    <source>
        <strain>MW2</strain>
    </source>
</reference>
<gene>
    <name evidence="1" type="primary">dtd</name>
    <name type="ordered locus">MW1583</name>
</gene>
<keyword id="KW-0963">Cytoplasm</keyword>
<keyword id="KW-0378">Hydrolase</keyword>
<keyword id="KW-0694">RNA-binding</keyword>
<keyword id="KW-0820">tRNA-binding</keyword>
<proteinExistence type="inferred from homology"/>
<comment type="function">
    <text evidence="1">An aminoacyl-tRNA editing enzyme that deacylates mischarged D-aminoacyl-tRNAs. Also deacylates mischarged glycyl-tRNA(Ala), protecting cells against glycine mischarging by AlaRS. Acts via tRNA-based rather than protein-based catalysis; rejects L-amino acids rather than detecting D-amino acids in the active site. By recycling D-aminoacyl-tRNA to D-amino acids and free tRNA molecules, this enzyme counteracts the toxicity associated with the formation of D-aminoacyl-tRNA entities in vivo and helps enforce protein L-homochirality.</text>
</comment>
<comment type="catalytic activity">
    <reaction evidence="1">
        <text>glycyl-tRNA(Ala) + H2O = tRNA(Ala) + glycine + H(+)</text>
        <dbReference type="Rhea" id="RHEA:53744"/>
        <dbReference type="Rhea" id="RHEA-COMP:9657"/>
        <dbReference type="Rhea" id="RHEA-COMP:13640"/>
        <dbReference type="ChEBI" id="CHEBI:15377"/>
        <dbReference type="ChEBI" id="CHEBI:15378"/>
        <dbReference type="ChEBI" id="CHEBI:57305"/>
        <dbReference type="ChEBI" id="CHEBI:78442"/>
        <dbReference type="ChEBI" id="CHEBI:78522"/>
        <dbReference type="EC" id="3.1.1.96"/>
    </reaction>
</comment>
<comment type="catalytic activity">
    <reaction evidence="1">
        <text>a D-aminoacyl-tRNA + H2O = a tRNA + a D-alpha-amino acid + H(+)</text>
        <dbReference type="Rhea" id="RHEA:13953"/>
        <dbReference type="Rhea" id="RHEA-COMP:10123"/>
        <dbReference type="Rhea" id="RHEA-COMP:10124"/>
        <dbReference type="ChEBI" id="CHEBI:15377"/>
        <dbReference type="ChEBI" id="CHEBI:15378"/>
        <dbReference type="ChEBI" id="CHEBI:59871"/>
        <dbReference type="ChEBI" id="CHEBI:78442"/>
        <dbReference type="ChEBI" id="CHEBI:79333"/>
        <dbReference type="EC" id="3.1.1.96"/>
    </reaction>
</comment>
<comment type="subunit">
    <text evidence="1">Homodimer.</text>
</comment>
<comment type="subcellular location">
    <subcellularLocation>
        <location evidence="1">Cytoplasm</location>
    </subcellularLocation>
</comment>
<comment type="domain">
    <text evidence="1">A Gly-cisPro motif from one monomer fits into the active site of the other monomer to allow specific chiral rejection of L-amino acids.</text>
</comment>
<comment type="similarity">
    <text evidence="1">Belongs to the DTD family.</text>
</comment>